<feature type="chain" id="PRO_0000234928" description="Beta-hexosaminidase">
    <location>
        <begin position="1"/>
        <end position="331"/>
    </location>
</feature>
<feature type="active site" description="Proton donor/acceptor" evidence="1">
    <location>
        <position position="176"/>
    </location>
</feature>
<feature type="active site" description="Nucleophile" evidence="1">
    <location>
        <position position="247"/>
    </location>
</feature>
<feature type="binding site" evidence="1">
    <location>
        <position position="60"/>
    </location>
    <ligand>
        <name>substrate</name>
    </ligand>
</feature>
<feature type="binding site" evidence="1">
    <location>
        <position position="68"/>
    </location>
    <ligand>
        <name>substrate</name>
    </ligand>
</feature>
<feature type="binding site" evidence="1">
    <location>
        <position position="133"/>
    </location>
    <ligand>
        <name>substrate</name>
    </ligand>
</feature>
<feature type="binding site" evidence="1">
    <location>
        <begin position="163"/>
        <end position="164"/>
    </location>
    <ligand>
        <name>substrate</name>
    </ligand>
</feature>
<feature type="site" description="Important for catalytic activity" evidence="1">
    <location>
        <position position="174"/>
    </location>
</feature>
<organism>
    <name type="scientific">Xanthomonas campestris pv. campestris (strain 8004)</name>
    <dbReference type="NCBI Taxonomy" id="314565"/>
    <lineage>
        <taxon>Bacteria</taxon>
        <taxon>Pseudomonadati</taxon>
        <taxon>Pseudomonadota</taxon>
        <taxon>Gammaproteobacteria</taxon>
        <taxon>Lysobacterales</taxon>
        <taxon>Lysobacteraceae</taxon>
        <taxon>Xanthomonas</taxon>
    </lineage>
</organism>
<dbReference type="EC" id="3.2.1.52" evidence="1"/>
<dbReference type="EMBL" id="CP000050">
    <property type="protein sequence ID" value="AAY50006.1"/>
    <property type="molecule type" value="Genomic_DNA"/>
</dbReference>
<dbReference type="RefSeq" id="WP_011036477.1">
    <property type="nucleotide sequence ID" value="NZ_CP155948.1"/>
</dbReference>
<dbReference type="SMR" id="Q4USG7"/>
<dbReference type="CAZy" id="GH3">
    <property type="family name" value="Glycoside Hydrolase Family 3"/>
</dbReference>
<dbReference type="KEGG" id="xcb:XC_2958"/>
<dbReference type="HOGENOM" id="CLU_008392_0_0_6"/>
<dbReference type="UniPathway" id="UPA00544"/>
<dbReference type="PHI-base" id="PHI:3282"/>
<dbReference type="Proteomes" id="UP000000420">
    <property type="component" value="Chromosome"/>
</dbReference>
<dbReference type="GO" id="GO:0005737">
    <property type="term" value="C:cytoplasm"/>
    <property type="evidence" value="ECO:0007669"/>
    <property type="project" value="UniProtKB-SubCell"/>
</dbReference>
<dbReference type="GO" id="GO:0004563">
    <property type="term" value="F:beta-N-acetylhexosaminidase activity"/>
    <property type="evidence" value="ECO:0007669"/>
    <property type="project" value="UniProtKB-UniRule"/>
</dbReference>
<dbReference type="GO" id="GO:0005975">
    <property type="term" value="P:carbohydrate metabolic process"/>
    <property type="evidence" value="ECO:0007669"/>
    <property type="project" value="InterPro"/>
</dbReference>
<dbReference type="GO" id="GO:0051301">
    <property type="term" value="P:cell division"/>
    <property type="evidence" value="ECO:0007669"/>
    <property type="project" value="UniProtKB-KW"/>
</dbReference>
<dbReference type="GO" id="GO:0071555">
    <property type="term" value="P:cell wall organization"/>
    <property type="evidence" value="ECO:0007669"/>
    <property type="project" value="UniProtKB-KW"/>
</dbReference>
<dbReference type="GO" id="GO:0009252">
    <property type="term" value="P:peptidoglycan biosynthetic process"/>
    <property type="evidence" value="ECO:0007669"/>
    <property type="project" value="UniProtKB-KW"/>
</dbReference>
<dbReference type="GO" id="GO:0009254">
    <property type="term" value="P:peptidoglycan turnover"/>
    <property type="evidence" value="ECO:0007669"/>
    <property type="project" value="UniProtKB-UniRule"/>
</dbReference>
<dbReference type="GO" id="GO:0008360">
    <property type="term" value="P:regulation of cell shape"/>
    <property type="evidence" value="ECO:0007669"/>
    <property type="project" value="UniProtKB-KW"/>
</dbReference>
<dbReference type="Gene3D" id="3.20.20.300">
    <property type="entry name" value="Glycoside hydrolase, family 3, N-terminal domain"/>
    <property type="match status" value="1"/>
</dbReference>
<dbReference type="HAMAP" id="MF_00364">
    <property type="entry name" value="NagZ"/>
    <property type="match status" value="1"/>
</dbReference>
<dbReference type="InterPro" id="IPR022956">
    <property type="entry name" value="Beta_hexosaminidase_bac"/>
</dbReference>
<dbReference type="InterPro" id="IPR019800">
    <property type="entry name" value="Glyco_hydro_3_AS"/>
</dbReference>
<dbReference type="InterPro" id="IPR001764">
    <property type="entry name" value="Glyco_hydro_3_N"/>
</dbReference>
<dbReference type="InterPro" id="IPR036962">
    <property type="entry name" value="Glyco_hydro_3_N_sf"/>
</dbReference>
<dbReference type="InterPro" id="IPR017853">
    <property type="entry name" value="Glycoside_hydrolase_SF"/>
</dbReference>
<dbReference type="InterPro" id="IPR050226">
    <property type="entry name" value="NagZ_Beta-hexosaminidase"/>
</dbReference>
<dbReference type="NCBIfam" id="NF003740">
    <property type="entry name" value="PRK05337.1"/>
    <property type="match status" value="1"/>
</dbReference>
<dbReference type="PANTHER" id="PTHR30480:SF13">
    <property type="entry name" value="BETA-HEXOSAMINIDASE"/>
    <property type="match status" value="1"/>
</dbReference>
<dbReference type="PANTHER" id="PTHR30480">
    <property type="entry name" value="BETA-HEXOSAMINIDASE-RELATED"/>
    <property type="match status" value="1"/>
</dbReference>
<dbReference type="Pfam" id="PF00933">
    <property type="entry name" value="Glyco_hydro_3"/>
    <property type="match status" value="1"/>
</dbReference>
<dbReference type="SUPFAM" id="SSF51445">
    <property type="entry name" value="(Trans)glycosidases"/>
    <property type="match status" value="1"/>
</dbReference>
<dbReference type="PROSITE" id="PS00775">
    <property type="entry name" value="GLYCOSYL_HYDROL_F3"/>
    <property type="match status" value="1"/>
</dbReference>
<sequence length="331" mass="34516">MLLIGVAGTELSAQERDWLQHDAVAGVVLFKRNFASRTQVAELSAAIRAAAPRPQLICVDQEGGRVQRFREGYSALAPLQSFGALYATDPEGALAQARAHAQLMASEVRASGVDLSFAPVVDLARGNRAIGDRAFSDDPQVVASFTRAYVQALHAAGMGATLKHFPGHGTVLEDTHVDHASDPRPLDVLLAEDLVPFVAGIDAGADAVMMAHVVYPQVAPEPAGYASRWIEQILRGQLGFRGVVFSDDIGMAASFSAGGVAGRVHAHLDAGCDVVLVCHPELVAESLQAVAGRTLNTAALIGLIGRGALGWDGLLADAPTTSLSASFGTLA</sequence>
<name>NAGZ_XANC8</name>
<protein>
    <recommendedName>
        <fullName evidence="1">Beta-hexosaminidase</fullName>
        <ecNumber evidence="1">3.2.1.52</ecNumber>
    </recommendedName>
    <alternativeName>
        <fullName evidence="1">Beta-N-acetylhexosaminidase</fullName>
    </alternativeName>
    <alternativeName>
        <fullName evidence="1">N-acetyl-beta-glucosaminidase</fullName>
    </alternativeName>
</protein>
<reference key="1">
    <citation type="journal article" date="2005" name="Genome Res.">
        <title>Comparative and functional genomic analyses of the pathogenicity of phytopathogen Xanthomonas campestris pv. campestris.</title>
        <authorList>
            <person name="Qian W."/>
            <person name="Jia Y."/>
            <person name="Ren S.-X."/>
            <person name="He Y.-Q."/>
            <person name="Feng J.-X."/>
            <person name="Lu L.-F."/>
            <person name="Sun Q."/>
            <person name="Ying G."/>
            <person name="Tang D.-J."/>
            <person name="Tang H."/>
            <person name="Wu W."/>
            <person name="Hao P."/>
            <person name="Wang L."/>
            <person name="Jiang B.-L."/>
            <person name="Zeng S."/>
            <person name="Gu W.-Y."/>
            <person name="Lu G."/>
            <person name="Rong L."/>
            <person name="Tian Y."/>
            <person name="Yao Z."/>
            <person name="Fu G."/>
            <person name="Chen B."/>
            <person name="Fang R."/>
            <person name="Qiang B."/>
            <person name="Chen Z."/>
            <person name="Zhao G.-P."/>
            <person name="Tang J.-L."/>
            <person name="He C."/>
        </authorList>
    </citation>
    <scope>NUCLEOTIDE SEQUENCE [LARGE SCALE GENOMIC DNA]</scope>
    <source>
        <strain>8004</strain>
    </source>
</reference>
<gene>
    <name evidence="1" type="primary">nagZ</name>
    <name type="ordered locus">XC_2958</name>
</gene>
<proteinExistence type="inferred from homology"/>
<comment type="function">
    <text evidence="1">Plays a role in peptidoglycan recycling by cleaving the terminal beta-1,4-linked N-acetylglucosamine (GlcNAc) from peptide-linked peptidoglycan fragments, giving rise to free GlcNAc, anhydro-N-acetylmuramic acid and anhydro-N-acetylmuramic acid-linked peptides.</text>
</comment>
<comment type="catalytic activity">
    <reaction evidence="1">
        <text>Hydrolysis of terminal non-reducing N-acetyl-D-hexosamine residues in N-acetyl-beta-D-hexosaminides.</text>
        <dbReference type="EC" id="3.2.1.52"/>
    </reaction>
</comment>
<comment type="pathway">
    <text evidence="1">Cell wall biogenesis; peptidoglycan recycling.</text>
</comment>
<comment type="subcellular location">
    <subcellularLocation>
        <location evidence="1">Cytoplasm</location>
    </subcellularLocation>
</comment>
<comment type="similarity">
    <text evidence="1">Belongs to the glycosyl hydrolase 3 family. NagZ subfamily.</text>
</comment>
<evidence type="ECO:0000255" key="1">
    <source>
        <dbReference type="HAMAP-Rule" id="MF_00364"/>
    </source>
</evidence>
<accession>Q4USG7</accession>
<keyword id="KW-0131">Cell cycle</keyword>
<keyword id="KW-0132">Cell division</keyword>
<keyword id="KW-0133">Cell shape</keyword>
<keyword id="KW-0961">Cell wall biogenesis/degradation</keyword>
<keyword id="KW-0963">Cytoplasm</keyword>
<keyword id="KW-0326">Glycosidase</keyword>
<keyword id="KW-0378">Hydrolase</keyword>
<keyword id="KW-0573">Peptidoglycan synthesis</keyword>